<dbReference type="EMBL" id="GU292938">
    <property type="protein sequence ID" value="ADB56754.1"/>
    <property type="molecule type" value="mRNA"/>
</dbReference>
<dbReference type="ArachnoServer" id="AS001592">
    <property type="toxin name" value="U11-theraphotoxin-Hhn1a"/>
</dbReference>
<dbReference type="GO" id="GO:0005576">
    <property type="term" value="C:extracellular region"/>
    <property type="evidence" value="ECO:0007669"/>
    <property type="project" value="UniProtKB-SubCell"/>
</dbReference>
<dbReference type="GO" id="GO:0019871">
    <property type="term" value="F:sodium channel inhibitor activity"/>
    <property type="evidence" value="ECO:0007669"/>
    <property type="project" value="InterPro"/>
</dbReference>
<dbReference type="GO" id="GO:0090729">
    <property type="term" value="F:toxin activity"/>
    <property type="evidence" value="ECO:0007669"/>
    <property type="project" value="UniProtKB-KW"/>
</dbReference>
<dbReference type="InterPro" id="IPR012627">
    <property type="entry name" value="Toxin_22"/>
</dbReference>
<dbReference type="Pfam" id="PF08092">
    <property type="entry name" value="Toxin_22"/>
    <property type="match status" value="1"/>
</dbReference>
<accession>D2Y261</accession>
<organism>
    <name type="scientific">Cyriopagopus hainanus</name>
    <name type="common">Chinese bird spider</name>
    <name type="synonym">Haplopelma hainanum</name>
    <dbReference type="NCBI Taxonomy" id="209901"/>
    <lineage>
        <taxon>Eukaryota</taxon>
        <taxon>Metazoa</taxon>
        <taxon>Ecdysozoa</taxon>
        <taxon>Arthropoda</taxon>
        <taxon>Chelicerata</taxon>
        <taxon>Arachnida</taxon>
        <taxon>Araneae</taxon>
        <taxon>Mygalomorphae</taxon>
        <taxon>Theraphosidae</taxon>
        <taxon>Haplopelma</taxon>
    </lineage>
</organism>
<evidence type="ECO:0000250" key="1"/>
<evidence type="ECO:0000255" key="2"/>
<evidence type="ECO:0000269" key="3">
    <source>
    </source>
</evidence>
<evidence type="ECO:0000305" key="4"/>
<reference key="1">
    <citation type="journal article" date="2010" name="J. Proteome Res.">
        <title>Molecular diversification of peptide toxins from the tarantula Haplopelma hainanum (Ornithoctonus hainana) venom based on transcriptomic, peptidomic, and genomic analyses.</title>
        <authorList>
            <person name="Tang X."/>
            <person name="Zhang Y."/>
            <person name="Hu W."/>
            <person name="Xu D."/>
            <person name="Tao H."/>
            <person name="Yang X."/>
            <person name="Li Y."/>
            <person name="Jiang L."/>
            <person name="Liang S."/>
        </authorList>
    </citation>
    <scope>NUCLEOTIDE SEQUENCE [LARGE SCALE MRNA]</scope>
    <scope>PROTEIN SEQUENCE OF 75-113</scope>
    <scope>IDENTIFICATION BY MASS SPECTROMETRY</scope>
    <source>
        <tissue>Venom</tissue>
        <tissue>Venom gland</tissue>
    </source>
</reference>
<protein>
    <recommendedName>
        <fullName>U11-theraphotoxin-Hhn1a</fullName>
        <shortName>U11-TRTX-Hhn1a</shortName>
    </recommendedName>
    <alternativeName>
        <fullName>Hainantoxin-XVI.9</fullName>
        <shortName>HNTX-XVI.9</shortName>
    </alternativeName>
    <alternativeName>
        <fullName>Peptide F4-19.87</fullName>
    </alternativeName>
</protein>
<keyword id="KW-0903">Direct protein sequencing</keyword>
<keyword id="KW-1015">Disulfide bond</keyword>
<keyword id="KW-0872">Ion channel impairing toxin</keyword>
<keyword id="KW-0960">Knottin</keyword>
<keyword id="KW-0964">Secreted</keyword>
<keyword id="KW-0732">Signal</keyword>
<keyword id="KW-0800">Toxin</keyword>
<proteinExistence type="evidence at protein level"/>
<sequence>MNTVRVTFLLVFVLAVSLGQADKDENRMEMQEKAEQGKSYLDFAENLLLQKLEELEAKLLEEDSEESRNSRQKRCIGEGVPCDENDPRCCSGLVCLKPTLHGIWYKSYYCYKK</sequence>
<name>H16A9_CYRHA</name>
<feature type="signal peptide" evidence="2">
    <location>
        <begin position="1"/>
        <end position="21"/>
    </location>
</feature>
<feature type="propeptide" id="PRO_0000400873" evidence="3">
    <location>
        <begin position="22"/>
        <end position="74"/>
    </location>
</feature>
<feature type="peptide" id="PRO_0000400874" description="U11-theraphotoxin-Hhn1a">
    <location>
        <begin position="75"/>
        <end position="113"/>
    </location>
</feature>
<feature type="disulfide bond" evidence="1">
    <location>
        <begin position="75"/>
        <end position="90"/>
    </location>
</feature>
<feature type="disulfide bond" evidence="1">
    <location>
        <begin position="82"/>
        <end position="95"/>
    </location>
</feature>
<feature type="disulfide bond" evidence="1">
    <location>
        <begin position="89"/>
        <end position="110"/>
    </location>
</feature>
<comment type="function">
    <text evidence="1">Probable ion channel inhibitor.</text>
</comment>
<comment type="subcellular location">
    <subcellularLocation>
        <location>Secreted</location>
    </subcellularLocation>
</comment>
<comment type="tissue specificity">
    <text>Expressed by the venom gland.</text>
</comment>
<comment type="domain">
    <text evidence="1">The presence of a 'disulfide through disulfide knot' structurally defines this protein as a knottin.</text>
</comment>
<comment type="similarity">
    <text evidence="4">Belongs to the neurotoxin 14 (magi-1) family. 01 (HNTX-16) subfamily.</text>
</comment>